<gene>
    <name evidence="1" type="primary">trpR</name>
    <name type="ordered locus">SeHA_C4993</name>
</gene>
<name>TRPR_SALHS</name>
<feature type="chain" id="PRO_1000197155" description="Trp operon repressor">
    <location>
        <begin position="1"/>
        <end position="108"/>
    </location>
</feature>
<feature type="DNA-binding region" evidence="1">
    <location>
        <begin position="68"/>
        <end position="91"/>
    </location>
</feature>
<reference key="1">
    <citation type="journal article" date="2011" name="J. Bacteriol.">
        <title>Comparative genomics of 28 Salmonella enterica isolates: evidence for CRISPR-mediated adaptive sublineage evolution.</title>
        <authorList>
            <person name="Fricke W.F."/>
            <person name="Mammel M.K."/>
            <person name="McDermott P.F."/>
            <person name="Tartera C."/>
            <person name="White D.G."/>
            <person name="Leclerc J.E."/>
            <person name="Ravel J."/>
            <person name="Cebula T.A."/>
        </authorList>
    </citation>
    <scope>NUCLEOTIDE SEQUENCE [LARGE SCALE GENOMIC DNA]</scope>
    <source>
        <strain>SL476</strain>
    </source>
</reference>
<dbReference type="EMBL" id="CP001120">
    <property type="protein sequence ID" value="ACF70085.1"/>
    <property type="molecule type" value="Genomic_DNA"/>
</dbReference>
<dbReference type="RefSeq" id="WP_000192003.1">
    <property type="nucleotide sequence ID" value="NC_011083.1"/>
</dbReference>
<dbReference type="SMR" id="B4TH16"/>
<dbReference type="KEGG" id="seh:SeHA_C4993"/>
<dbReference type="HOGENOM" id="CLU_147939_0_0_6"/>
<dbReference type="Proteomes" id="UP000001866">
    <property type="component" value="Chromosome"/>
</dbReference>
<dbReference type="GO" id="GO:0005737">
    <property type="term" value="C:cytoplasm"/>
    <property type="evidence" value="ECO:0007669"/>
    <property type="project" value="UniProtKB-SubCell"/>
</dbReference>
<dbReference type="GO" id="GO:0003700">
    <property type="term" value="F:DNA-binding transcription factor activity"/>
    <property type="evidence" value="ECO:0007669"/>
    <property type="project" value="InterPro"/>
</dbReference>
<dbReference type="GO" id="GO:0043565">
    <property type="term" value="F:sequence-specific DNA binding"/>
    <property type="evidence" value="ECO:0007669"/>
    <property type="project" value="InterPro"/>
</dbReference>
<dbReference type="GO" id="GO:0045892">
    <property type="term" value="P:negative regulation of DNA-templated transcription"/>
    <property type="evidence" value="ECO:0007669"/>
    <property type="project" value="UniProtKB-UniRule"/>
</dbReference>
<dbReference type="FunFam" id="1.10.1270.10:FF:000001">
    <property type="entry name" value="Trp operon repressor"/>
    <property type="match status" value="1"/>
</dbReference>
<dbReference type="Gene3D" id="1.10.1270.10">
    <property type="entry name" value="TrpR-like"/>
    <property type="match status" value="1"/>
</dbReference>
<dbReference type="HAMAP" id="MF_00475">
    <property type="entry name" value="Trp_repressor"/>
    <property type="match status" value="1"/>
</dbReference>
<dbReference type="InterPro" id="IPR000831">
    <property type="entry name" value="Trp_repress"/>
</dbReference>
<dbReference type="InterPro" id="IPR013335">
    <property type="entry name" value="Trp_repress_bac"/>
</dbReference>
<dbReference type="InterPro" id="IPR010921">
    <property type="entry name" value="Trp_repressor/repl_initiator"/>
</dbReference>
<dbReference type="InterPro" id="IPR038116">
    <property type="entry name" value="TrpR-like_sf"/>
</dbReference>
<dbReference type="NCBIfam" id="TIGR01321">
    <property type="entry name" value="TrpR"/>
    <property type="match status" value="1"/>
</dbReference>
<dbReference type="PANTHER" id="PTHR38025">
    <property type="entry name" value="TRP OPERON REPRESSOR"/>
    <property type="match status" value="1"/>
</dbReference>
<dbReference type="PANTHER" id="PTHR38025:SF1">
    <property type="entry name" value="TRP OPERON REPRESSOR"/>
    <property type="match status" value="1"/>
</dbReference>
<dbReference type="Pfam" id="PF01371">
    <property type="entry name" value="Trp_repressor"/>
    <property type="match status" value="1"/>
</dbReference>
<dbReference type="PIRSF" id="PIRSF003196">
    <property type="entry name" value="Trp_repressor"/>
    <property type="match status" value="1"/>
</dbReference>
<dbReference type="SUPFAM" id="SSF48295">
    <property type="entry name" value="TrpR-like"/>
    <property type="match status" value="1"/>
</dbReference>
<proteinExistence type="inferred from homology"/>
<evidence type="ECO:0000255" key="1">
    <source>
        <dbReference type="HAMAP-Rule" id="MF_00475"/>
    </source>
</evidence>
<keyword id="KW-0963">Cytoplasm</keyword>
<keyword id="KW-0238">DNA-binding</keyword>
<keyword id="KW-0678">Repressor</keyword>
<keyword id="KW-0804">Transcription</keyword>
<keyword id="KW-0805">Transcription regulation</keyword>
<sequence>MTQHSPYSSAIAEQRNQEWLRFVELLRQAYAEDLHLPLLQLMLTPDEREALGTRVRIIEELLRGEMSQRELKTELGAGIATITRGSNSLKSAPVELRHWLENVLLKNA</sequence>
<comment type="function">
    <text evidence="1">This protein is an aporepressor. When complexed with L-tryptophan it binds the operator region of the trp operon (5'-ACTAGT-'3') and prevents the initiation of transcription. The complex also regulates trp repressor biosynthesis by binding to its regulatory region.</text>
</comment>
<comment type="subunit">
    <text evidence="1">Homodimer.</text>
</comment>
<comment type="subcellular location">
    <subcellularLocation>
        <location evidence="1">Cytoplasm</location>
    </subcellularLocation>
</comment>
<comment type="similarity">
    <text evidence="1">Belongs to the TrpR family.</text>
</comment>
<organism>
    <name type="scientific">Salmonella heidelberg (strain SL476)</name>
    <dbReference type="NCBI Taxonomy" id="454169"/>
    <lineage>
        <taxon>Bacteria</taxon>
        <taxon>Pseudomonadati</taxon>
        <taxon>Pseudomonadota</taxon>
        <taxon>Gammaproteobacteria</taxon>
        <taxon>Enterobacterales</taxon>
        <taxon>Enterobacteriaceae</taxon>
        <taxon>Salmonella</taxon>
    </lineage>
</organism>
<accession>B4TH16</accession>
<protein>
    <recommendedName>
        <fullName evidence="1">Trp operon repressor</fullName>
    </recommendedName>
</protein>